<evidence type="ECO:0000255" key="1"/>
<evidence type="ECO:0000255" key="2">
    <source>
        <dbReference type="PROSITE-ProRule" id="PRU00498"/>
    </source>
</evidence>
<evidence type="ECO:0000269" key="3">
    <source>
    </source>
</evidence>
<evidence type="ECO:0000269" key="4">
    <source>
    </source>
</evidence>
<evidence type="ECO:0000303" key="5">
    <source>
    </source>
</evidence>
<evidence type="ECO:0000305" key="6"/>
<evidence type="ECO:0000305" key="7">
    <source>
    </source>
</evidence>
<gene>
    <name evidence="5" type="primary">phiH</name>
</gene>
<proteinExistence type="evidence at protein level"/>
<name>PHIH_FUNX7</name>
<accession>A0A348HAY3</accession>
<protein>
    <recommendedName>
        <fullName evidence="5">Phomoidride biosynthesis cluster protein H</fullName>
    </recommendedName>
</protein>
<feature type="chain" id="PRO_0000458929" description="Phomoidride biosynthesis cluster protein H">
    <location>
        <begin position="1"/>
        <end position="281"/>
    </location>
</feature>
<feature type="transmembrane region" description="Helical" evidence="1">
    <location>
        <begin position="9"/>
        <end position="29"/>
    </location>
</feature>
<feature type="transmembrane region" description="Helical" evidence="1">
    <location>
        <begin position="149"/>
        <end position="169"/>
    </location>
</feature>
<feature type="transmembrane region" description="Helical" evidence="1">
    <location>
        <begin position="196"/>
        <end position="216"/>
    </location>
</feature>
<feature type="transmembrane region" description="Helical" evidence="1">
    <location>
        <begin position="234"/>
        <end position="254"/>
    </location>
</feature>
<feature type="glycosylation site" description="N-linked (GlcNAc...) asparagine" evidence="2">
    <location>
        <position position="67"/>
    </location>
</feature>
<feature type="glycosylation site" description="N-linked (GlcNAc...) asparagine" evidence="2">
    <location>
        <position position="147"/>
    </location>
</feature>
<reference key="1">
    <citation type="journal article" date="2015" name="Org. Lett.">
        <title>Biosynthetic study on antihypercholesterolemic agent phomoidride: general biogenesis of fungal dimeric anhydrides.</title>
        <authorList>
            <person name="Fujii R."/>
            <person name="Matsu Y."/>
            <person name="Minami A."/>
            <person name="Nagamine S."/>
            <person name="Takeuchi I."/>
            <person name="Gomi K."/>
            <person name="Oikawa H."/>
        </authorList>
    </citation>
    <scope>NUCLEOTIDE SEQUENCE [GENOMIC DNA]</scope>
    <scope>FUNCTION</scope>
    <source>
        <strain>ATCC 74256</strain>
    </source>
</reference>
<reference key="2">
    <citation type="journal article" date="1997" name="J. Antibiot.">
        <title>CP-225,917 and CP-263,114, novel Ras farnesylation inhibitors from an unidentified fungus. I. Taxonomy, fermentation, isolation, and biochemical properties.</title>
        <authorList>
            <person name="Dabrah T.T."/>
            <person name="Harwood H.J. Jr."/>
            <person name="Huang L.H."/>
            <person name="Jankovich N.D."/>
            <person name="Kaneko T."/>
            <person name="Li J.C."/>
            <person name="Lindsey S."/>
            <person name="Moshier P.M."/>
            <person name="Subashi T.A."/>
            <person name="Therrien M."/>
            <person name="Watts P.C."/>
        </authorList>
    </citation>
    <scope>BIOTECHNOLOGY</scope>
</reference>
<dbReference type="EMBL" id="LC086931">
    <property type="protein sequence ID" value="BBG28505.1"/>
    <property type="molecule type" value="Genomic_DNA"/>
</dbReference>
<dbReference type="SMR" id="A0A348HAY3"/>
<dbReference type="GO" id="GO:0016020">
    <property type="term" value="C:membrane"/>
    <property type="evidence" value="ECO:0007669"/>
    <property type="project" value="UniProtKB-SubCell"/>
</dbReference>
<dbReference type="InterPro" id="IPR049326">
    <property type="entry name" value="Rhodopsin_dom_fungi"/>
</dbReference>
<dbReference type="InterPro" id="IPR052337">
    <property type="entry name" value="SAT4-like"/>
</dbReference>
<dbReference type="PANTHER" id="PTHR33048:SF134">
    <property type="entry name" value="INTEGRAL MEMBRANE PROTEIN"/>
    <property type="match status" value="1"/>
</dbReference>
<dbReference type="PANTHER" id="PTHR33048">
    <property type="entry name" value="PTH11-LIKE INTEGRAL MEMBRANE PROTEIN (AFU_ORTHOLOGUE AFUA_5G11245)"/>
    <property type="match status" value="1"/>
</dbReference>
<dbReference type="Pfam" id="PF20684">
    <property type="entry name" value="Fung_rhodopsin"/>
    <property type="match status" value="1"/>
</dbReference>
<comment type="function">
    <text evidence="3 6 7">Part of the gene cluster that mediates the biosynthesis of the antihypercholesterolemic agents phomoidrides which are dimeric anhydrides (PubMed:26558485). The function of phiH within the pathway has still to be determined (Probable). The pathway begins with the highly reducing polyketide synthase phiA that catalyzes the formation of a C12-fatty acyl-ACP, starting from one acetate and 5 malonate units. The hydrolase phiM is involved in the release of the C12-fatty acyl chain from phiA. The alkylcitrate synthase (ACS) phiJ and the alkylcitrate dehydratase (ACDH) phiI then give rise to decarboxylated monomeric anhydrides by coupling the C12-fatty acyl chain with oxalacetic acid. The cyclase phiC is responsible for the dimerization of the monomeric anhydrides which leads to the production of prephomoidride that contains the characteristic bicyclo[4.3.1]deca-1,6-diene system of phomoidrides. Iterative oxidation catalyzed by the alpha-ketoglutarate-dependent dioxygenase phiK produced then phomoidride A. Finally, the methyltransferase phiE converts phomoidride A to phomoidride B via an acetalization reaction. The phosphatidylethanolamine-binding protein phiB and phiN are not essential for dimerization and their functions have still to be determined (Probable).</text>
</comment>
<comment type="subcellular location">
    <subcellularLocation>
        <location evidence="1">Membrane</location>
        <topology evidence="1">Multi-pass membrane protein</topology>
    </subcellularLocation>
</comment>
<comment type="biotechnology">
    <text evidence="4">Phomoidrides A and B (also known as CP-225,917 and CP-263,114) are potent inhibitors of Ras farnesyltransferase and squalene synthase (PubMed:9066758). CP-225,917 and CP-263,114 inhibit Ras farnesyl transferase from rat brain with IC(50) values of 6 uM and 20 uoM, respectively (PubMed:9066758). CP-225,917 inhibits squalene synthase with an IC(50) value of 43 uM and CP-263,114 with an IC(50) of 160 uM (PubMed:9066758).</text>
</comment>
<comment type="similarity">
    <text evidence="6">Belongs to the SAT4 family.</text>
</comment>
<keyword id="KW-0325">Glycoprotein</keyword>
<keyword id="KW-0472">Membrane</keyword>
<keyword id="KW-0812">Transmembrane</keyword>
<keyword id="KW-1133">Transmembrane helix</keyword>
<organism>
    <name type="scientific">Fungal sp. (strain ATCC 74256)</name>
    <dbReference type="NCBI Taxonomy" id="1729595"/>
    <lineage>
        <taxon>Eukaryota</taxon>
        <taxon>Fungi</taxon>
    </lineage>
</organism>
<sequence>MGDMMQNRLYAVAATFSVLPVVFVGLRLWARRVKRVKLGWDDFTIMFALVRSSSYLGSLNRARCLFNATVLRIAVSHKTDTAVGGLGKASKTNADGIPIYDNTYWTHMKVSFGNRLSQVLAIGPTKMSVLFFYRRIFGNSGRTIFDNASMVLMIICAAWTVAYFFGNLFHYMPIKMLWTVTADKLPAPNKQLYLTQCYIDIATDALIISLPIPITFDPDPDFQTYYLATITYWTLIEAGLGIIAACLPLLVPIVRKMSWVLTPRSGQDDIPLNPKNPSPPS</sequence>